<dbReference type="EC" id="6.1.1.3" evidence="1"/>
<dbReference type="EMBL" id="CP000753">
    <property type="protein sequence ID" value="ABS08361.1"/>
    <property type="molecule type" value="Genomic_DNA"/>
</dbReference>
<dbReference type="RefSeq" id="WP_011846833.1">
    <property type="nucleotide sequence ID" value="NC_009665.1"/>
</dbReference>
<dbReference type="SMR" id="A6WNH2"/>
<dbReference type="KEGG" id="sbm:Shew185_2222"/>
<dbReference type="HOGENOM" id="CLU_008554_0_1_6"/>
<dbReference type="GO" id="GO:0005829">
    <property type="term" value="C:cytosol"/>
    <property type="evidence" value="ECO:0007669"/>
    <property type="project" value="TreeGrafter"/>
</dbReference>
<dbReference type="GO" id="GO:0005524">
    <property type="term" value="F:ATP binding"/>
    <property type="evidence" value="ECO:0007669"/>
    <property type="project" value="UniProtKB-UniRule"/>
</dbReference>
<dbReference type="GO" id="GO:0046872">
    <property type="term" value="F:metal ion binding"/>
    <property type="evidence" value="ECO:0007669"/>
    <property type="project" value="UniProtKB-KW"/>
</dbReference>
<dbReference type="GO" id="GO:0004829">
    <property type="term" value="F:threonine-tRNA ligase activity"/>
    <property type="evidence" value="ECO:0007669"/>
    <property type="project" value="UniProtKB-UniRule"/>
</dbReference>
<dbReference type="GO" id="GO:0000049">
    <property type="term" value="F:tRNA binding"/>
    <property type="evidence" value="ECO:0007669"/>
    <property type="project" value="UniProtKB-KW"/>
</dbReference>
<dbReference type="GO" id="GO:0006435">
    <property type="term" value="P:threonyl-tRNA aminoacylation"/>
    <property type="evidence" value="ECO:0007669"/>
    <property type="project" value="UniProtKB-UniRule"/>
</dbReference>
<dbReference type="CDD" id="cd01667">
    <property type="entry name" value="TGS_ThrRS"/>
    <property type="match status" value="1"/>
</dbReference>
<dbReference type="CDD" id="cd00860">
    <property type="entry name" value="ThrRS_anticodon"/>
    <property type="match status" value="1"/>
</dbReference>
<dbReference type="CDD" id="cd00771">
    <property type="entry name" value="ThrRS_core"/>
    <property type="match status" value="1"/>
</dbReference>
<dbReference type="FunFam" id="3.10.20.30:FF:000005">
    <property type="entry name" value="Threonine--tRNA ligase"/>
    <property type="match status" value="1"/>
</dbReference>
<dbReference type="FunFam" id="3.30.54.20:FF:000002">
    <property type="entry name" value="Threonine--tRNA ligase"/>
    <property type="match status" value="1"/>
</dbReference>
<dbReference type="FunFam" id="3.30.930.10:FF:000002">
    <property type="entry name" value="Threonine--tRNA ligase"/>
    <property type="match status" value="1"/>
</dbReference>
<dbReference type="FunFam" id="3.40.50.800:FF:000001">
    <property type="entry name" value="Threonine--tRNA ligase"/>
    <property type="match status" value="1"/>
</dbReference>
<dbReference type="FunFam" id="3.30.980.10:FF:000005">
    <property type="entry name" value="Threonyl-tRNA synthetase, mitochondrial"/>
    <property type="match status" value="1"/>
</dbReference>
<dbReference type="Gene3D" id="3.10.20.30">
    <property type="match status" value="1"/>
</dbReference>
<dbReference type="Gene3D" id="3.30.54.20">
    <property type="match status" value="1"/>
</dbReference>
<dbReference type="Gene3D" id="3.40.50.800">
    <property type="entry name" value="Anticodon-binding domain"/>
    <property type="match status" value="1"/>
</dbReference>
<dbReference type="Gene3D" id="3.30.930.10">
    <property type="entry name" value="Bira Bifunctional Protein, Domain 2"/>
    <property type="match status" value="1"/>
</dbReference>
<dbReference type="Gene3D" id="3.30.980.10">
    <property type="entry name" value="Threonyl-trna Synthetase, Chain A, domain 2"/>
    <property type="match status" value="1"/>
</dbReference>
<dbReference type="HAMAP" id="MF_00184">
    <property type="entry name" value="Thr_tRNA_synth"/>
    <property type="match status" value="1"/>
</dbReference>
<dbReference type="InterPro" id="IPR002314">
    <property type="entry name" value="aa-tRNA-synt_IIb"/>
</dbReference>
<dbReference type="InterPro" id="IPR006195">
    <property type="entry name" value="aa-tRNA-synth_II"/>
</dbReference>
<dbReference type="InterPro" id="IPR045864">
    <property type="entry name" value="aa-tRNA-synth_II/BPL/LPL"/>
</dbReference>
<dbReference type="InterPro" id="IPR004154">
    <property type="entry name" value="Anticodon-bd"/>
</dbReference>
<dbReference type="InterPro" id="IPR036621">
    <property type="entry name" value="Anticodon-bd_dom_sf"/>
</dbReference>
<dbReference type="InterPro" id="IPR012675">
    <property type="entry name" value="Beta-grasp_dom_sf"/>
</dbReference>
<dbReference type="InterPro" id="IPR004095">
    <property type="entry name" value="TGS"/>
</dbReference>
<dbReference type="InterPro" id="IPR012676">
    <property type="entry name" value="TGS-like"/>
</dbReference>
<dbReference type="InterPro" id="IPR002320">
    <property type="entry name" value="Thr-tRNA-ligase_IIa"/>
</dbReference>
<dbReference type="InterPro" id="IPR018163">
    <property type="entry name" value="Thr/Ala-tRNA-synth_IIc_edit"/>
</dbReference>
<dbReference type="InterPro" id="IPR047246">
    <property type="entry name" value="ThrRS_anticodon"/>
</dbReference>
<dbReference type="InterPro" id="IPR033728">
    <property type="entry name" value="ThrRS_core"/>
</dbReference>
<dbReference type="InterPro" id="IPR012947">
    <property type="entry name" value="tRNA_SAD"/>
</dbReference>
<dbReference type="NCBIfam" id="TIGR00418">
    <property type="entry name" value="thrS"/>
    <property type="match status" value="1"/>
</dbReference>
<dbReference type="PANTHER" id="PTHR11451:SF44">
    <property type="entry name" value="THREONINE--TRNA LIGASE, CHLOROPLASTIC_MITOCHONDRIAL 2"/>
    <property type="match status" value="1"/>
</dbReference>
<dbReference type="PANTHER" id="PTHR11451">
    <property type="entry name" value="THREONINE-TRNA LIGASE"/>
    <property type="match status" value="1"/>
</dbReference>
<dbReference type="Pfam" id="PF03129">
    <property type="entry name" value="HGTP_anticodon"/>
    <property type="match status" value="1"/>
</dbReference>
<dbReference type="Pfam" id="PF02824">
    <property type="entry name" value="TGS"/>
    <property type="match status" value="1"/>
</dbReference>
<dbReference type="Pfam" id="PF00587">
    <property type="entry name" value="tRNA-synt_2b"/>
    <property type="match status" value="1"/>
</dbReference>
<dbReference type="Pfam" id="PF07973">
    <property type="entry name" value="tRNA_SAD"/>
    <property type="match status" value="1"/>
</dbReference>
<dbReference type="PRINTS" id="PR01047">
    <property type="entry name" value="TRNASYNTHTHR"/>
</dbReference>
<dbReference type="SMART" id="SM00863">
    <property type="entry name" value="tRNA_SAD"/>
    <property type="match status" value="1"/>
</dbReference>
<dbReference type="SUPFAM" id="SSF52954">
    <property type="entry name" value="Class II aaRS ABD-related"/>
    <property type="match status" value="1"/>
</dbReference>
<dbReference type="SUPFAM" id="SSF55681">
    <property type="entry name" value="Class II aaRS and biotin synthetases"/>
    <property type="match status" value="1"/>
</dbReference>
<dbReference type="SUPFAM" id="SSF81271">
    <property type="entry name" value="TGS-like"/>
    <property type="match status" value="1"/>
</dbReference>
<dbReference type="SUPFAM" id="SSF55186">
    <property type="entry name" value="ThrRS/AlaRS common domain"/>
    <property type="match status" value="1"/>
</dbReference>
<dbReference type="PROSITE" id="PS50862">
    <property type="entry name" value="AA_TRNA_LIGASE_II"/>
    <property type="match status" value="1"/>
</dbReference>
<dbReference type="PROSITE" id="PS51880">
    <property type="entry name" value="TGS"/>
    <property type="match status" value="1"/>
</dbReference>
<comment type="function">
    <text evidence="1">Catalyzes the attachment of threonine to tRNA(Thr) in a two-step reaction: L-threonine is first activated by ATP to form Thr-AMP and then transferred to the acceptor end of tRNA(Thr). Also edits incorrectly charged L-seryl-tRNA(Thr).</text>
</comment>
<comment type="catalytic activity">
    <reaction evidence="1">
        <text>tRNA(Thr) + L-threonine + ATP = L-threonyl-tRNA(Thr) + AMP + diphosphate + H(+)</text>
        <dbReference type="Rhea" id="RHEA:24624"/>
        <dbReference type="Rhea" id="RHEA-COMP:9670"/>
        <dbReference type="Rhea" id="RHEA-COMP:9704"/>
        <dbReference type="ChEBI" id="CHEBI:15378"/>
        <dbReference type="ChEBI" id="CHEBI:30616"/>
        <dbReference type="ChEBI" id="CHEBI:33019"/>
        <dbReference type="ChEBI" id="CHEBI:57926"/>
        <dbReference type="ChEBI" id="CHEBI:78442"/>
        <dbReference type="ChEBI" id="CHEBI:78534"/>
        <dbReference type="ChEBI" id="CHEBI:456215"/>
        <dbReference type="EC" id="6.1.1.3"/>
    </reaction>
</comment>
<comment type="cofactor">
    <cofactor evidence="1">
        <name>Zn(2+)</name>
        <dbReference type="ChEBI" id="CHEBI:29105"/>
    </cofactor>
    <text evidence="1">Binds 1 zinc ion per subunit.</text>
</comment>
<comment type="subunit">
    <text evidence="1">Homodimer.</text>
</comment>
<comment type="subcellular location">
    <subcellularLocation>
        <location evidence="1">Cytoplasm</location>
    </subcellularLocation>
</comment>
<comment type="similarity">
    <text evidence="1">Belongs to the class-II aminoacyl-tRNA synthetase family.</text>
</comment>
<proteinExistence type="inferred from homology"/>
<accession>A6WNH2</accession>
<name>SYT_SHEB8</name>
<reference key="1">
    <citation type="submission" date="2007-07" db="EMBL/GenBank/DDBJ databases">
        <title>Complete sequence of chromosome of Shewanella baltica OS185.</title>
        <authorList>
            <consortium name="US DOE Joint Genome Institute"/>
            <person name="Copeland A."/>
            <person name="Lucas S."/>
            <person name="Lapidus A."/>
            <person name="Barry K."/>
            <person name="Glavina del Rio T."/>
            <person name="Dalin E."/>
            <person name="Tice H."/>
            <person name="Pitluck S."/>
            <person name="Sims D."/>
            <person name="Brettin T."/>
            <person name="Bruce D."/>
            <person name="Detter J.C."/>
            <person name="Han C."/>
            <person name="Schmutz J."/>
            <person name="Larimer F."/>
            <person name="Land M."/>
            <person name="Hauser L."/>
            <person name="Kyrpides N."/>
            <person name="Mikhailova N."/>
            <person name="Brettar I."/>
            <person name="Rodrigues J."/>
            <person name="Konstantinidis K."/>
            <person name="Tiedje J."/>
            <person name="Richardson P."/>
        </authorList>
    </citation>
    <scope>NUCLEOTIDE SEQUENCE [LARGE SCALE GENOMIC DNA]</scope>
    <source>
        <strain>OS185</strain>
    </source>
</reference>
<evidence type="ECO:0000255" key="1">
    <source>
        <dbReference type="HAMAP-Rule" id="MF_00184"/>
    </source>
</evidence>
<evidence type="ECO:0000255" key="2">
    <source>
        <dbReference type="PROSITE-ProRule" id="PRU01228"/>
    </source>
</evidence>
<feature type="chain" id="PRO_1000020502" description="Threonine--tRNA ligase">
    <location>
        <begin position="1"/>
        <end position="642"/>
    </location>
</feature>
<feature type="domain" description="TGS" evidence="2">
    <location>
        <begin position="1"/>
        <end position="61"/>
    </location>
</feature>
<feature type="region of interest" description="Catalytic" evidence="1">
    <location>
        <begin position="243"/>
        <end position="534"/>
    </location>
</feature>
<feature type="binding site" evidence="1">
    <location>
        <position position="334"/>
    </location>
    <ligand>
        <name>Zn(2+)</name>
        <dbReference type="ChEBI" id="CHEBI:29105"/>
    </ligand>
</feature>
<feature type="binding site" evidence="1">
    <location>
        <position position="385"/>
    </location>
    <ligand>
        <name>Zn(2+)</name>
        <dbReference type="ChEBI" id="CHEBI:29105"/>
    </ligand>
</feature>
<feature type="binding site" evidence="1">
    <location>
        <position position="511"/>
    </location>
    <ligand>
        <name>Zn(2+)</name>
        <dbReference type="ChEBI" id="CHEBI:29105"/>
    </ligand>
</feature>
<sequence>MPVITLPDGSKREFAHAVSTLDVAADIGPGLAKACIAGRVNGELKDACDLIETDAELSIITAKDEEGVEILRHSCAHLLGHAIKQMWPETKMAIGPVIDNGFYYDIDLEHKLTQDDIDALEKRMLQLAKTNYDVVKRVVSWQEARDTFAARGEDYKIAILDENISKDATPALYHHEEYTDMCRGPHVPNMRFCQHFKLMSIAGAYWRGNSENKMLQRIYGTAWADKKALSTHLTRLEEAAKRDHRKIGKQLDLYHMQEEAPGMVFWHNDGWSIFLELERFIRRKLNQYTYQEVKGPLMMDRVLWERSGHWDKYSEAMFTTSSENREYAIKPMNCPGHVQIFNQGLKSYRDLPLRMAEFGCCHRNEPSGSLHGLMRVRGFTQDDAHIFCTDSQVQEEVSACIQMVYDTYATFGFENIVVKLSTRPEKRIGDDAMWDRAEEALKQALRDNNIEFTILPGEGAFYGPKIEFTLHDCLDRAWQCGTVQLDYALPSRLGATYVAEDNSRQTPVMIHRAILGSLERFLGILIEEYAGRFPTWLAPMQVVVMNITDKQADYVEEVVKFFKEQGIRASFDLRNEKIGFKIREHTLRRVPYLLVVGDQEMENKEVAVRTRDGIDLGKMRLEDFATKIHQQISLRSLKLLEE</sequence>
<organism>
    <name type="scientific">Shewanella baltica (strain OS185)</name>
    <dbReference type="NCBI Taxonomy" id="402882"/>
    <lineage>
        <taxon>Bacteria</taxon>
        <taxon>Pseudomonadati</taxon>
        <taxon>Pseudomonadota</taxon>
        <taxon>Gammaproteobacteria</taxon>
        <taxon>Alteromonadales</taxon>
        <taxon>Shewanellaceae</taxon>
        <taxon>Shewanella</taxon>
    </lineage>
</organism>
<protein>
    <recommendedName>
        <fullName evidence="1">Threonine--tRNA ligase</fullName>
        <ecNumber evidence="1">6.1.1.3</ecNumber>
    </recommendedName>
    <alternativeName>
        <fullName evidence="1">Threonyl-tRNA synthetase</fullName>
        <shortName evidence="1">ThrRS</shortName>
    </alternativeName>
</protein>
<keyword id="KW-0030">Aminoacyl-tRNA synthetase</keyword>
<keyword id="KW-0067">ATP-binding</keyword>
<keyword id="KW-0963">Cytoplasm</keyword>
<keyword id="KW-0436">Ligase</keyword>
<keyword id="KW-0479">Metal-binding</keyword>
<keyword id="KW-0547">Nucleotide-binding</keyword>
<keyword id="KW-0648">Protein biosynthesis</keyword>
<keyword id="KW-0694">RNA-binding</keyword>
<keyword id="KW-0820">tRNA-binding</keyword>
<keyword id="KW-0862">Zinc</keyword>
<gene>
    <name evidence="1" type="primary">thrS</name>
    <name type="ordered locus">Shew185_2222</name>
</gene>